<organism>
    <name type="scientific">Saccharum officinarum</name>
    <name type="common">Sugarcane</name>
    <dbReference type="NCBI Taxonomy" id="4547"/>
    <lineage>
        <taxon>Eukaryota</taxon>
        <taxon>Viridiplantae</taxon>
        <taxon>Streptophyta</taxon>
        <taxon>Embryophyta</taxon>
        <taxon>Tracheophyta</taxon>
        <taxon>Spermatophyta</taxon>
        <taxon>Magnoliopsida</taxon>
        <taxon>Liliopsida</taxon>
        <taxon>Poales</taxon>
        <taxon>Poaceae</taxon>
        <taxon>PACMAD clade</taxon>
        <taxon>Panicoideae</taxon>
        <taxon>Andropogonodae</taxon>
        <taxon>Andropogoneae</taxon>
        <taxon>Saccharinae</taxon>
        <taxon>Saccharum</taxon>
        <taxon>Saccharum officinarum species complex</taxon>
    </lineage>
</organism>
<keyword id="KW-0150">Chloroplast</keyword>
<keyword id="KW-0249">Electron transport</keyword>
<keyword id="KW-0349">Heme</keyword>
<keyword id="KW-0408">Iron</keyword>
<keyword id="KW-0472">Membrane</keyword>
<keyword id="KW-0479">Metal-binding</keyword>
<keyword id="KW-0602">Photosynthesis</keyword>
<keyword id="KW-0604">Photosystem II</keyword>
<keyword id="KW-0934">Plastid</keyword>
<keyword id="KW-0793">Thylakoid</keyword>
<keyword id="KW-0812">Transmembrane</keyword>
<keyword id="KW-1133">Transmembrane helix</keyword>
<keyword id="KW-0813">Transport</keyword>
<proteinExistence type="inferred from homology"/>
<comment type="function">
    <text evidence="1">This b-type cytochrome is tightly associated with the reaction center of photosystem II (PSII). PSII is a light-driven water:plastoquinone oxidoreductase that uses light energy to abstract electrons from H(2)O, generating O(2) and a proton gradient subsequently used for ATP formation. It consists of a core antenna complex that captures photons, and an electron transfer chain that converts photonic excitation into a charge separation.</text>
</comment>
<comment type="cofactor">
    <cofactor evidence="1">
        <name>heme b</name>
        <dbReference type="ChEBI" id="CHEBI:60344"/>
    </cofactor>
    <text evidence="1">With its partner (PsbE) binds heme. PSII binds additional chlorophylls, carotenoids and specific lipids.</text>
</comment>
<comment type="subunit">
    <text evidence="1">Heterodimer of an alpha subunit and a beta subunit. PSII is composed of 1 copy each of membrane proteins PsbA, PsbB, PsbC, PsbD, PsbE, PsbF, PsbH, PsbI, PsbJ, PsbK, PsbL, PsbM, PsbT, PsbX, PsbY, PsbZ, Psb30/Ycf12, at least 3 peripheral proteins of the oxygen-evolving complex and a large number of cofactors. It forms dimeric complexes.</text>
</comment>
<comment type="subcellular location">
    <subcellularLocation>
        <location evidence="1">Plastid</location>
        <location evidence="1">Chloroplast thylakoid membrane</location>
        <topology evidence="1">Single-pass membrane protein</topology>
    </subcellularLocation>
</comment>
<comment type="similarity">
    <text evidence="1">Belongs to the PsbE/PsbF family.</text>
</comment>
<reference key="1">
    <citation type="journal article" date="2004" name="DNA Res.">
        <title>Complete nucleotide sequence of the sugarcane (Saccharum officinarum) chloroplast genome: a comparative analysis of four monocot chloroplast genomes.</title>
        <authorList>
            <person name="Asano T."/>
            <person name="Tsudzuki T."/>
            <person name="Takahashi S."/>
            <person name="Shimada H."/>
            <person name="Kadowaki K."/>
        </authorList>
    </citation>
    <scope>NUCLEOTIDE SEQUENCE [LARGE SCALE GENOMIC DNA]</scope>
</reference>
<name>PSBF_SACOF</name>
<gene>
    <name evidence="1" type="primary">psbF</name>
</gene>
<accession>Q6ENU8</accession>
<protein>
    <recommendedName>
        <fullName evidence="1">Cytochrome b559 subunit beta</fullName>
    </recommendedName>
    <alternativeName>
        <fullName evidence="1">PSII reaction center subunit VI</fullName>
    </alternativeName>
</protein>
<geneLocation type="chloroplast"/>
<feature type="chain" id="PRO_0000200446" description="Cytochrome b559 subunit beta">
    <location>
        <begin position="1"/>
        <end position="39"/>
    </location>
</feature>
<feature type="transmembrane region" description="Helical" evidence="1">
    <location>
        <begin position="14"/>
        <end position="30"/>
    </location>
</feature>
<feature type="binding site" description="axial binding residue" evidence="1">
    <location>
        <position position="18"/>
    </location>
    <ligand>
        <name>heme</name>
        <dbReference type="ChEBI" id="CHEBI:30413"/>
        <note>ligand shared with alpha subunit</note>
    </ligand>
    <ligandPart>
        <name>Fe</name>
        <dbReference type="ChEBI" id="CHEBI:18248"/>
    </ligandPart>
</feature>
<evidence type="ECO:0000255" key="1">
    <source>
        <dbReference type="HAMAP-Rule" id="MF_00643"/>
    </source>
</evidence>
<dbReference type="EMBL" id="AP006714">
    <property type="protein sequence ID" value="BAD27308.1"/>
    <property type="molecule type" value="Genomic_DNA"/>
</dbReference>
<dbReference type="RefSeq" id="YP_009389586.1">
    <property type="nucleotide sequence ID" value="NC_035224.1"/>
</dbReference>
<dbReference type="SMR" id="Q6ENU8"/>
<dbReference type="GeneID" id="33347819"/>
<dbReference type="GO" id="GO:0009535">
    <property type="term" value="C:chloroplast thylakoid membrane"/>
    <property type="evidence" value="ECO:0007669"/>
    <property type="project" value="UniProtKB-SubCell"/>
</dbReference>
<dbReference type="GO" id="GO:0009539">
    <property type="term" value="C:photosystem II reaction center"/>
    <property type="evidence" value="ECO:0007669"/>
    <property type="project" value="InterPro"/>
</dbReference>
<dbReference type="GO" id="GO:0009055">
    <property type="term" value="F:electron transfer activity"/>
    <property type="evidence" value="ECO:0007669"/>
    <property type="project" value="UniProtKB-UniRule"/>
</dbReference>
<dbReference type="GO" id="GO:0020037">
    <property type="term" value="F:heme binding"/>
    <property type="evidence" value="ECO:0007669"/>
    <property type="project" value="InterPro"/>
</dbReference>
<dbReference type="GO" id="GO:0005506">
    <property type="term" value="F:iron ion binding"/>
    <property type="evidence" value="ECO:0007669"/>
    <property type="project" value="UniProtKB-UniRule"/>
</dbReference>
<dbReference type="GO" id="GO:0009767">
    <property type="term" value="P:photosynthetic electron transport chain"/>
    <property type="evidence" value="ECO:0007669"/>
    <property type="project" value="InterPro"/>
</dbReference>
<dbReference type="HAMAP" id="MF_00643">
    <property type="entry name" value="PSII_PsbF"/>
    <property type="match status" value="1"/>
</dbReference>
<dbReference type="InterPro" id="IPR006241">
    <property type="entry name" value="PSII_cyt_b559_bsu"/>
</dbReference>
<dbReference type="InterPro" id="IPR006216">
    <property type="entry name" value="PSII_cyt_b559_CS"/>
</dbReference>
<dbReference type="InterPro" id="IPR013081">
    <property type="entry name" value="PSII_cyt_b559_N"/>
</dbReference>
<dbReference type="NCBIfam" id="TIGR01333">
    <property type="entry name" value="cyt_b559_beta"/>
    <property type="match status" value="1"/>
</dbReference>
<dbReference type="Pfam" id="PF00283">
    <property type="entry name" value="Cytochrom_B559"/>
    <property type="match status" value="1"/>
</dbReference>
<dbReference type="PIRSF" id="PIRSF000037">
    <property type="entry name" value="PsbF"/>
    <property type="match status" value="1"/>
</dbReference>
<dbReference type="SUPFAM" id="SSF161045">
    <property type="entry name" value="Cytochrome b559 subunits"/>
    <property type="match status" value="1"/>
</dbReference>
<dbReference type="PROSITE" id="PS00537">
    <property type="entry name" value="CYTOCHROME_B559"/>
    <property type="match status" value="1"/>
</dbReference>
<sequence>MTIDRTYPIFTVRWLAVHGLAVPTVFFLGSISAMQFIQR</sequence>